<gene>
    <name evidence="1" type="primary">ytjA</name>
    <name type="ordered locus">EcHS_A4611</name>
</gene>
<accession>A8A8A5</accession>
<name>YTJA_ECOHS</name>
<sequence length="53" mass="5536">MFRWGIIFLVIALIAAALGFGGLAGTAAGAAKIVFVVGIILFLVSLFMGRKRP</sequence>
<reference key="1">
    <citation type="journal article" date="2008" name="J. Bacteriol.">
        <title>The pangenome structure of Escherichia coli: comparative genomic analysis of E. coli commensal and pathogenic isolates.</title>
        <authorList>
            <person name="Rasko D.A."/>
            <person name="Rosovitz M.J."/>
            <person name="Myers G.S.A."/>
            <person name="Mongodin E.F."/>
            <person name="Fricke W.F."/>
            <person name="Gajer P."/>
            <person name="Crabtree J."/>
            <person name="Sebaihia M."/>
            <person name="Thomson N.R."/>
            <person name="Chaudhuri R."/>
            <person name="Henderson I.R."/>
            <person name="Sperandio V."/>
            <person name="Ravel J."/>
        </authorList>
    </citation>
    <scope>NUCLEOTIDE SEQUENCE [LARGE SCALE GENOMIC DNA]</scope>
    <source>
        <strain>HS</strain>
    </source>
</reference>
<comment type="subcellular location">
    <subcellularLocation>
        <location evidence="1">Cell membrane</location>
        <topology evidence="1">Multi-pass membrane protein</topology>
    </subcellularLocation>
</comment>
<comment type="similarity">
    <text evidence="1">Belongs to the UPF0391 family.</text>
</comment>
<protein>
    <recommendedName>
        <fullName evidence="1">UPF0391 membrane protein YtjA</fullName>
    </recommendedName>
</protein>
<evidence type="ECO:0000255" key="1">
    <source>
        <dbReference type="HAMAP-Rule" id="MF_01361"/>
    </source>
</evidence>
<keyword id="KW-1003">Cell membrane</keyword>
<keyword id="KW-0472">Membrane</keyword>
<keyword id="KW-0812">Transmembrane</keyword>
<keyword id="KW-1133">Transmembrane helix</keyword>
<proteinExistence type="inferred from homology"/>
<organism>
    <name type="scientific">Escherichia coli O9:H4 (strain HS)</name>
    <dbReference type="NCBI Taxonomy" id="331112"/>
    <lineage>
        <taxon>Bacteria</taxon>
        <taxon>Pseudomonadati</taxon>
        <taxon>Pseudomonadota</taxon>
        <taxon>Gammaproteobacteria</taxon>
        <taxon>Enterobacterales</taxon>
        <taxon>Enterobacteriaceae</taxon>
        <taxon>Escherichia</taxon>
    </lineage>
</organism>
<feature type="chain" id="PRO_1000067780" description="UPF0391 membrane protein YtjA">
    <location>
        <begin position="1"/>
        <end position="53"/>
    </location>
</feature>
<feature type="transmembrane region" description="Helical" evidence="1">
    <location>
        <begin position="4"/>
        <end position="24"/>
    </location>
</feature>
<feature type="transmembrane region" description="Helical" evidence="1">
    <location>
        <begin position="30"/>
        <end position="48"/>
    </location>
</feature>
<dbReference type="EMBL" id="CP000802">
    <property type="protein sequence ID" value="ABV08759.1"/>
    <property type="molecule type" value="Genomic_DNA"/>
</dbReference>
<dbReference type="RefSeq" id="WP_000490275.1">
    <property type="nucleotide sequence ID" value="NC_009800.1"/>
</dbReference>
<dbReference type="KEGG" id="ecx:EcHS_A4611"/>
<dbReference type="HOGENOM" id="CLU_187346_2_0_6"/>
<dbReference type="GO" id="GO:0005886">
    <property type="term" value="C:plasma membrane"/>
    <property type="evidence" value="ECO:0007669"/>
    <property type="project" value="UniProtKB-SubCell"/>
</dbReference>
<dbReference type="HAMAP" id="MF_01361">
    <property type="entry name" value="UPF0391"/>
    <property type="match status" value="1"/>
</dbReference>
<dbReference type="InterPro" id="IPR009760">
    <property type="entry name" value="DUF1328"/>
</dbReference>
<dbReference type="NCBIfam" id="NF010229">
    <property type="entry name" value="PRK13682.1-4"/>
    <property type="match status" value="1"/>
</dbReference>
<dbReference type="NCBIfam" id="NF010230">
    <property type="entry name" value="PRK13682.1-5"/>
    <property type="match status" value="1"/>
</dbReference>
<dbReference type="Pfam" id="PF07043">
    <property type="entry name" value="DUF1328"/>
    <property type="match status" value="1"/>
</dbReference>
<dbReference type="PIRSF" id="PIRSF036466">
    <property type="entry name" value="UCP036466"/>
    <property type="match status" value="1"/>
</dbReference>